<sequence>MAGNCSWEAHSTNQNKMCPGMSEALELYSRGFLTIEQIATLPPPAVTNYIFLLLCLCGLVGNGLVLWFFGFSIKRTPFSIYFLHLASADGIYLFSKAVIALLNMGTFLGSFPDYVRRVSRIVGLCTFFAGVSLLPAISIERCVSVIFPMWYWRRRPKRLSAGVCALLWLLSFLVTSIHNYFCMFLGHEASGTACLNMDISLGILLFFLFCPLMVLPCLALILHVECRARRRQRSAKLNHVVLAIVSVFLVSSIYLGIDWFLFWVFQIPAPFPEYVTDLCICINSSAKPIVYFLAGRDKSQRLWEPLRVVFQRALRDGAEPGDAASSTPNTVTMEMQCPSGNAS</sequence>
<comment type="function">
    <text evidence="1">Orphan receptor. May bind to a neuropeptide and may regulate nociceptor function and/or development, including the sensation or modulation of pain (By similarity).</text>
</comment>
<comment type="subcellular location">
    <subcellularLocation>
        <location>Cell membrane</location>
        <topology>Multi-pass membrane protein</topology>
    </subcellularLocation>
</comment>
<comment type="tissue specificity">
    <text>Gut, vas deferens, uterus and aorta; barely detectable in liver, kidney, lung, and salivary gland. In the brain, markedly abundant in the cerebellum.</text>
</comment>
<comment type="similarity">
    <text evidence="3">Belongs to the G-protein coupled receptor 1 family. Mas subfamily.</text>
</comment>
<accession>P23749</accession>
<protein>
    <recommendedName>
        <fullName>Mas-related G-protein coupled receptor member F</fullName>
        <shortName>Mas-related gene F protein</shortName>
    </recommendedName>
    <alternativeName>
        <fullName>G-protein coupled receptor RTA</fullName>
    </alternativeName>
</protein>
<dbReference type="EMBL" id="M35297">
    <property type="protein sequence ID" value="AAA42087.1"/>
    <property type="molecule type" value="mRNA"/>
</dbReference>
<dbReference type="EMBL" id="M35298">
    <property type="protein sequence ID" value="AAA42088.1"/>
    <property type="molecule type" value="Genomic_DNA"/>
</dbReference>
<dbReference type="PIR" id="A35639">
    <property type="entry name" value="A35639"/>
</dbReference>
<dbReference type="RefSeq" id="NP_714944.1">
    <property type="nucleotide sequence ID" value="NM_153722.2"/>
</dbReference>
<dbReference type="SMR" id="P23749"/>
<dbReference type="FunCoup" id="P23749">
    <property type="interactions" value="61"/>
</dbReference>
<dbReference type="STRING" id="10116.ENSRNOP00000017948"/>
<dbReference type="GlyCosmos" id="P23749">
    <property type="glycosylation" value="1 site, No reported glycans"/>
</dbReference>
<dbReference type="GlyGen" id="P23749">
    <property type="glycosylation" value="1 site"/>
</dbReference>
<dbReference type="PhosphoSitePlus" id="P23749"/>
<dbReference type="PaxDb" id="10116-ENSRNOP00000017948"/>
<dbReference type="GeneID" id="266762"/>
<dbReference type="KEGG" id="rno:266762"/>
<dbReference type="UCSC" id="RGD:708478">
    <property type="organism name" value="rat"/>
</dbReference>
<dbReference type="AGR" id="RGD:708478"/>
<dbReference type="CTD" id="116535"/>
<dbReference type="RGD" id="708478">
    <property type="gene designation" value="Mrgprf"/>
</dbReference>
<dbReference type="eggNOG" id="ENOG502SIXZ">
    <property type="taxonomic scope" value="Eukaryota"/>
</dbReference>
<dbReference type="InParanoid" id="P23749"/>
<dbReference type="OrthoDB" id="9896011at2759"/>
<dbReference type="PhylomeDB" id="P23749"/>
<dbReference type="PRO" id="PR:P23749"/>
<dbReference type="Proteomes" id="UP000002494">
    <property type="component" value="Unplaced"/>
</dbReference>
<dbReference type="GO" id="GO:0005886">
    <property type="term" value="C:plasma membrane"/>
    <property type="evidence" value="ECO:0000318"/>
    <property type="project" value="GO_Central"/>
</dbReference>
<dbReference type="GO" id="GO:0004930">
    <property type="term" value="F:G protein-coupled receptor activity"/>
    <property type="evidence" value="ECO:0000318"/>
    <property type="project" value="GO_Central"/>
</dbReference>
<dbReference type="GO" id="GO:0007186">
    <property type="term" value="P:G protein-coupled receptor signaling pathway"/>
    <property type="evidence" value="ECO:0000318"/>
    <property type="project" value="GO_Central"/>
</dbReference>
<dbReference type="CDD" id="cd15109">
    <property type="entry name" value="7tmA_MrgprF"/>
    <property type="match status" value="1"/>
</dbReference>
<dbReference type="FunFam" id="1.20.1070.10:FF:000235">
    <property type="entry name" value="mas-related G-protein coupled receptor member F"/>
    <property type="match status" value="1"/>
</dbReference>
<dbReference type="Gene3D" id="1.20.1070.10">
    <property type="entry name" value="Rhodopsin 7-helix transmembrane proteins"/>
    <property type="match status" value="1"/>
</dbReference>
<dbReference type="InterPro" id="IPR000276">
    <property type="entry name" value="GPCR_Rhodpsn"/>
</dbReference>
<dbReference type="InterPro" id="IPR017452">
    <property type="entry name" value="GPCR_Rhodpsn_7TM"/>
</dbReference>
<dbReference type="InterPro" id="IPR026228">
    <property type="entry name" value="MRGPCRF"/>
</dbReference>
<dbReference type="InterPro" id="IPR026234">
    <property type="entry name" value="MRGPCRFAMILY"/>
</dbReference>
<dbReference type="PANTHER" id="PTHR11334">
    <property type="entry name" value="MAS-RELATED G-PROTEIN COUPLED RECEPTOR"/>
    <property type="match status" value="1"/>
</dbReference>
<dbReference type="PANTHER" id="PTHR11334:SF3">
    <property type="entry name" value="MAS-RELATED G-PROTEIN COUPLED RECEPTOR MEMBER F"/>
    <property type="match status" value="1"/>
</dbReference>
<dbReference type="Pfam" id="PF00001">
    <property type="entry name" value="7tm_1"/>
    <property type="match status" value="1"/>
</dbReference>
<dbReference type="PRINTS" id="PR00237">
    <property type="entry name" value="GPCRRHODOPSN"/>
</dbReference>
<dbReference type="PRINTS" id="PR02112">
    <property type="entry name" value="MRGPCRF"/>
</dbReference>
<dbReference type="PRINTS" id="PR02108">
    <property type="entry name" value="MRGPCRFAMILY"/>
</dbReference>
<dbReference type="SUPFAM" id="SSF81321">
    <property type="entry name" value="Family A G protein-coupled receptor-like"/>
    <property type="match status" value="1"/>
</dbReference>
<dbReference type="PROSITE" id="PS00237">
    <property type="entry name" value="G_PROTEIN_RECEP_F1_1"/>
    <property type="match status" value="1"/>
</dbReference>
<dbReference type="PROSITE" id="PS50262">
    <property type="entry name" value="G_PROTEIN_RECEP_F1_2"/>
    <property type="match status" value="1"/>
</dbReference>
<reference key="1">
    <citation type="journal article" date="1990" name="Proc. Natl. Acad. Sci. U.S.A.">
        <title>RTA, a candidate G protein-coupled receptor: cloning, sequencing, and tissue distribution.</title>
        <authorList>
            <person name="Ross P.C."/>
            <person name="Figler R.A."/>
            <person name="Corjay M.H."/>
            <person name="Barber C.M."/>
            <person name="Adam N."/>
            <person name="Harcus D.R."/>
            <person name="Lynch K.R."/>
        </authorList>
    </citation>
    <scope>NUCLEOTIDE SEQUENCE [GENOMIC DNA / MRNA]</scope>
    <source>
        <strain>Sprague-Dawley</strain>
        <tissue>Aorta</tissue>
    </source>
</reference>
<keyword id="KW-1003">Cell membrane</keyword>
<keyword id="KW-0297">G-protein coupled receptor</keyword>
<keyword id="KW-0325">Glycoprotein</keyword>
<keyword id="KW-0472">Membrane</keyword>
<keyword id="KW-0675">Receptor</keyword>
<keyword id="KW-1185">Reference proteome</keyword>
<keyword id="KW-0807">Transducer</keyword>
<keyword id="KW-0812">Transmembrane</keyword>
<keyword id="KW-1133">Transmembrane helix</keyword>
<feature type="chain" id="PRO_0000069766" description="Mas-related G-protein coupled receptor member F">
    <location>
        <begin position="1"/>
        <end position="343"/>
    </location>
</feature>
<feature type="topological domain" description="Extracellular" evidence="2">
    <location>
        <begin position="1"/>
        <end position="44"/>
    </location>
</feature>
<feature type="transmembrane region" description="Helical; Name=1" evidence="2">
    <location>
        <begin position="45"/>
        <end position="66"/>
    </location>
</feature>
<feature type="topological domain" description="Cytoplasmic" evidence="2">
    <location>
        <begin position="67"/>
        <end position="82"/>
    </location>
</feature>
<feature type="transmembrane region" description="Helical; Name=2" evidence="2">
    <location>
        <begin position="83"/>
        <end position="104"/>
    </location>
</feature>
<feature type="topological domain" description="Extracellular" evidence="2">
    <location>
        <begin position="105"/>
        <end position="123"/>
    </location>
</feature>
<feature type="transmembrane region" description="Helical; Name=3" evidence="2">
    <location>
        <begin position="124"/>
        <end position="144"/>
    </location>
</feature>
<feature type="topological domain" description="Cytoplasmic" evidence="2">
    <location>
        <begin position="145"/>
        <end position="160"/>
    </location>
</feature>
<feature type="transmembrane region" description="Helical; Name=4" evidence="2">
    <location>
        <begin position="161"/>
        <end position="181"/>
    </location>
</feature>
<feature type="topological domain" description="Extracellular" evidence="2">
    <location>
        <begin position="182"/>
        <end position="198"/>
    </location>
</feature>
<feature type="transmembrane region" description="Helical; Name=5" evidence="2">
    <location>
        <begin position="199"/>
        <end position="220"/>
    </location>
</feature>
<feature type="topological domain" description="Cytoplasmic" evidence="2">
    <location>
        <begin position="221"/>
        <end position="241"/>
    </location>
</feature>
<feature type="transmembrane region" description="Helical; Name=6" evidence="2">
    <location>
        <begin position="242"/>
        <end position="263"/>
    </location>
</feature>
<feature type="topological domain" description="Extracellular" evidence="2">
    <location>
        <begin position="264"/>
        <end position="273"/>
    </location>
</feature>
<feature type="transmembrane region" description="Helical; Name=7" evidence="2">
    <location>
        <begin position="274"/>
        <end position="294"/>
    </location>
</feature>
<feature type="topological domain" description="Cytoplasmic" evidence="2">
    <location>
        <begin position="295"/>
        <end position="343"/>
    </location>
</feature>
<feature type="region of interest" description="Disordered" evidence="4">
    <location>
        <begin position="318"/>
        <end position="343"/>
    </location>
</feature>
<feature type="compositionally biased region" description="Polar residues" evidence="4">
    <location>
        <begin position="324"/>
        <end position="343"/>
    </location>
</feature>
<feature type="glycosylation site" description="N-linked (GlcNAc...) asparagine" evidence="2">
    <location>
        <position position="4"/>
    </location>
</feature>
<name>MRGRF_RAT</name>
<proteinExistence type="evidence at transcript level"/>
<evidence type="ECO:0000250" key="1"/>
<evidence type="ECO:0000255" key="2"/>
<evidence type="ECO:0000255" key="3">
    <source>
        <dbReference type="PROSITE-ProRule" id="PRU00521"/>
    </source>
</evidence>
<evidence type="ECO:0000256" key="4">
    <source>
        <dbReference type="SAM" id="MobiDB-lite"/>
    </source>
</evidence>
<organism>
    <name type="scientific">Rattus norvegicus</name>
    <name type="common">Rat</name>
    <dbReference type="NCBI Taxonomy" id="10116"/>
    <lineage>
        <taxon>Eukaryota</taxon>
        <taxon>Metazoa</taxon>
        <taxon>Chordata</taxon>
        <taxon>Craniata</taxon>
        <taxon>Vertebrata</taxon>
        <taxon>Euteleostomi</taxon>
        <taxon>Mammalia</taxon>
        <taxon>Eutheria</taxon>
        <taxon>Euarchontoglires</taxon>
        <taxon>Glires</taxon>
        <taxon>Rodentia</taxon>
        <taxon>Myomorpha</taxon>
        <taxon>Muroidea</taxon>
        <taxon>Muridae</taxon>
        <taxon>Murinae</taxon>
        <taxon>Rattus</taxon>
    </lineage>
</organism>
<gene>
    <name type="primary">Mrgprf</name>
    <name type="synonym">Mrgf</name>
    <name type="synonym">Rta</name>
</gene>